<evidence type="ECO:0000255" key="1">
    <source>
        <dbReference type="HAMAP-Rule" id="MF_00539"/>
    </source>
</evidence>
<evidence type="ECO:0000256" key="2">
    <source>
        <dbReference type="SAM" id="MobiDB-lite"/>
    </source>
</evidence>
<evidence type="ECO:0000305" key="3"/>
<name>RL27_BURPS</name>
<feature type="chain" id="PRO_0000181063" description="Large ribosomal subunit protein bL27">
    <location>
        <begin position="1"/>
        <end position="87"/>
    </location>
</feature>
<feature type="region of interest" description="Disordered" evidence="2">
    <location>
        <begin position="1"/>
        <end position="21"/>
    </location>
</feature>
<feature type="sequence conflict" description="In Ref. 1; AAG01348." evidence="3" ref="1">
    <original>F</original>
    <variation>V</variation>
    <location>
        <position position="60"/>
    </location>
</feature>
<organism>
    <name type="scientific">Burkholderia pseudomallei (strain K96243)</name>
    <dbReference type="NCBI Taxonomy" id="272560"/>
    <lineage>
        <taxon>Bacteria</taxon>
        <taxon>Pseudomonadati</taxon>
        <taxon>Pseudomonadota</taxon>
        <taxon>Betaproteobacteria</taxon>
        <taxon>Burkholderiales</taxon>
        <taxon>Burkholderiaceae</taxon>
        <taxon>Burkholderia</taxon>
        <taxon>pseudomallei group</taxon>
    </lineage>
</organism>
<reference key="1">
    <citation type="submission" date="2000-08" db="EMBL/GenBank/DDBJ databases">
        <title>Random sequencing of Burkholderia pseudomallei strain G9313 for clinical PCR development.</title>
        <authorList>
            <person name="Steiner B."/>
            <person name="Meyer R."/>
            <person name="Bowen M."/>
            <person name="Morrill W."/>
        </authorList>
    </citation>
    <scope>NUCLEOTIDE SEQUENCE [GENOMIC DNA]</scope>
    <source>
        <strain>G9313</strain>
    </source>
</reference>
<reference key="2">
    <citation type="journal article" date="2004" name="Proc. Natl. Acad. Sci. U.S.A.">
        <title>Genomic plasticity of the causative agent of melioidosis, Burkholderia pseudomallei.</title>
        <authorList>
            <person name="Holden M.T.G."/>
            <person name="Titball R.W."/>
            <person name="Peacock S.J."/>
            <person name="Cerdeno-Tarraga A.-M."/>
            <person name="Atkins T."/>
            <person name="Crossman L.C."/>
            <person name="Pitt T."/>
            <person name="Churcher C."/>
            <person name="Mungall K.L."/>
            <person name="Bentley S.D."/>
            <person name="Sebaihia M."/>
            <person name="Thomson N.R."/>
            <person name="Bason N."/>
            <person name="Beacham I.R."/>
            <person name="Brooks K."/>
            <person name="Brown K.A."/>
            <person name="Brown N.F."/>
            <person name="Challis G.L."/>
            <person name="Cherevach I."/>
            <person name="Chillingworth T."/>
            <person name="Cronin A."/>
            <person name="Crossett B."/>
            <person name="Davis P."/>
            <person name="DeShazer D."/>
            <person name="Feltwell T."/>
            <person name="Fraser A."/>
            <person name="Hance Z."/>
            <person name="Hauser H."/>
            <person name="Holroyd S."/>
            <person name="Jagels K."/>
            <person name="Keith K.E."/>
            <person name="Maddison M."/>
            <person name="Moule S."/>
            <person name="Price C."/>
            <person name="Quail M.A."/>
            <person name="Rabbinowitsch E."/>
            <person name="Rutherford K."/>
            <person name="Sanders M."/>
            <person name="Simmonds M."/>
            <person name="Songsivilai S."/>
            <person name="Stevens K."/>
            <person name="Tumapa S."/>
            <person name="Vesaratchavest M."/>
            <person name="Whitehead S."/>
            <person name="Yeats C."/>
            <person name="Barrell B.G."/>
            <person name="Oyston P.C.F."/>
            <person name="Parkhill J."/>
        </authorList>
    </citation>
    <scope>NUCLEOTIDE SEQUENCE [LARGE SCALE GENOMIC DNA]</scope>
    <source>
        <strain>K96243</strain>
    </source>
</reference>
<gene>
    <name evidence="1" type="primary">rpmA</name>
    <name type="ordered locus">BPSL3004</name>
</gene>
<proteinExistence type="inferred from homology"/>
<protein>
    <recommendedName>
        <fullName evidence="1">Large ribosomal subunit protein bL27</fullName>
    </recommendedName>
    <alternativeName>
        <fullName evidence="3">50S ribosomal protein L27</fullName>
    </alternativeName>
</protein>
<dbReference type="EMBL" id="AF292383">
    <property type="protein sequence ID" value="AAG01348.1"/>
    <property type="molecule type" value="Genomic_DNA"/>
</dbReference>
<dbReference type="EMBL" id="BX571965">
    <property type="protein sequence ID" value="CAH37015.1"/>
    <property type="molecule type" value="Genomic_DNA"/>
</dbReference>
<dbReference type="RefSeq" id="WP_004194025.1">
    <property type="nucleotide sequence ID" value="NZ_CP009538.1"/>
</dbReference>
<dbReference type="RefSeq" id="YP_109599.1">
    <property type="nucleotide sequence ID" value="NC_006350.1"/>
</dbReference>
<dbReference type="SMR" id="Q9FD28"/>
<dbReference type="STRING" id="272560.BPSL3004"/>
<dbReference type="GeneID" id="93061604"/>
<dbReference type="KEGG" id="bps:BPSL3004"/>
<dbReference type="PATRIC" id="fig|272560.51.peg.2265"/>
<dbReference type="eggNOG" id="COG0211">
    <property type="taxonomic scope" value="Bacteria"/>
</dbReference>
<dbReference type="Proteomes" id="UP000000605">
    <property type="component" value="Chromosome 1"/>
</dbReference>
<dbReference type="GO" id="GO:0022625">
    <property type="term" value="C:cytosolic large ribosomal subunit"/>
    <property type="evidence" value="ECO:0007669"/>
    <property type="project" value="TreeGrafter"/>
</dbReference>
<dbReference type="GO" id="GO:0003735">
    <property type="term" value="F:structural constituent of ribosome"/>
    <property type="evidence" value="ECO:0007669"/>
    <property type="project" value="InterPro"/>
</dbReference>
<dbReference type="GO" id="GO:0006412">
    <property type="term" value="P:translation"/>
    <property type="evidence" value="ECO:0007669"/>
    <property type="project" value="UniProtKB-UniRule"/>
</dbReference>
<dbReference type="FunFam" id="2.40.50.100:FF:000001">
    <property type="entry name" value="50S ribosomal protein L27"/>
    <property type="match status" value="1"/>
</dbReference>
<dbReference type="Gene3D" id="2.40.50.100">
    <property type="match status" value="1"/>
</dbReference>
<dbReference type="HAMAP" id="MF_00539">
    <property type="entry name" value="Ribosomal_bL27"/>
    <property type="match status" value="1"/>
</dbReference>
<dbReference type="InterPro" id="IPR001684">
    <property type="entry name" value="Ribosomal_bL27"/>
</dbReference>
<dbReference type="InterPro" id="IPR018261">
    <property type="entry name" value="Ribosomal_bL27_CS"/>
</dbReference>
<dbReference type="NCBIfam" id="TIGR00062">
    <property type="entry name" value="L27"/>
    <property type="match status" value="1"/>
</dbReference>
<dbReference type="PANTHER" id="PTHR15893:SF0">
    <property type="entry name" value="LARGE RIBOSOMAL SUBUNIT PROTEIN BL27M"/>
    <property type="match status" value="1"/>
</dbReference>
<dbReference type="PANTHER" id="PTHR15893">
    <property type="entry name" value="RIBOSOMAL PROTEIN L27"/>
    <property type="match status" value="1"/>
</dbReference>
<dbReference type="Pfam" id="PF01016">
    <property type="entry name" value="Ribosomal_L27"/>
    <property type="match status" value="1"/>
</dbReference>
<dbReference type="PRINTS" id="PR00063">
    <property type="entry name" value="RIBOSOMALL27"/>
</dbReference>
<dbReference type="SUPFAM" id="SSF110324">
    <property type="entry name" value="Ribosomal L27 protein-like"/>
    <property type="match status" value="1"/>
</dbReference>
<dbReference type="PROSITE" id="PS00831">
    <property type="entry name" value="RIBOSOMAL_L27"/>
    <property type="match status" value="1"/>
</dbReference>
<comment type="similarity">
    <text evidence="1">Belongs to the bacterial ribosomal protein bL27 family.</text>
</comment>
<accession>Q9FD28</accession>
<accession>Q63QL9</accession>
<keyword id="KW-1185">Reference proteome</keyword>
<keyword id="KW-0687">Ribonucleoprotein</keyword>
<keyword id="KW-0689">Ribosomal protein</keyword>
<sequence>MAHKKAGGSSRNGRDSESKRLGVKVYGGQAINAGGIIVRQRGTRMHAGENVGMGKDHTLFALVDGHVKFTTKGAAKKHTVVVVPAAA</sequence>